<protein>
    <recommendedName>
        <fullName evidence="1">Small ribosomal subunit protein bS6</fullName>
    </recommendedName>
    <alternativeName>
        <fullName evidence="2">30S ribosomal protein S6</fullName>
    </alternativeName>
</protein>
<comment type="function">
    <text evidence="1">Binds together with bS18 to 16S ribosomal RNA.</text>
</comment>
<comment type="similarity">
    <text evidence="1">Belongs to the bacterial ribosomal protein bS6 family.</text>
</comment>
<gene>
    <name evidence="1" type="primary">rpsF</name>
    <name type="ordered locus">Tpet_0315</name>
</gene>
<proteinExistence type="inferred from homology"/>
<evidence type="ECO:0000255" key="1">
    <source>
        <dbReference type="HAMAP-Rule" id="MF_00360"/>
    </source>
</evidence>
<evidence type="ECO:0000305" key="2"/>
<name>RS6_THEP1</name>
<reference key="1">
    <citation type="submission" date="2007-05" db="EMBL/GenBank/DDBJ databases">
        <title>Complete sequence of Thermotoga petrophila RKU-1.</title>
        <authorList>
            <consortium name="US DOE Joint Genome Institute"/>
            <person name="Copeland A."/>
            <person name="Lucas S."/>
            <person name="Lapidus A."/>
            <person name="Barry K."/>
            <person name="Glavina del Rio T."/>
            <person name="Dalin E."/>
            <person name="Tice H."/>
            <person name="Pitluck S."/>
            <person name="Sims D."/>
            <person name="Brettin T."/>
            <person name="Bruce D."/>
            <person name="Detter J.C."/>
            <person name="Han C."/>
            <person name="Tapia R."/>
            <person name="Schmutz J."/>
            <person name="Larimer F."/>
            <person name="Land M."/>
            <person name="Hauser L."/>
            <person name="Kyrpides N."/>
            <person name="Mikhailova N."/>
            <person name="Nelson K."/>
            <person name="Gogarten J.P."/>
            <person name="Noll K."/>
            <person name="Richardson P."/>
        </authorList>
    </citation>
    <scope>NUCLEOTIDE SEQUENCE [LARGE SCALE GENOMIC DNA]</scope>
    <source>
        <strain>ATCC BAA-488 / DSM 13995 / JCM 10881 / RKU-1</strain>
    </source>
</reference>
<organism>
    <name type="scientific">Thermotoga petrophila (strain ATCC BAA-488 / DSM 13995 / JCM 10881 / RKU-1)</name>
    <dbReference type="NCBI Taxonomy" id="390874"/>
    <lineage>
        <taxon>Bacteria</taxon>
        <taxon>Thermotogati</taxon>
        <taxon>Thermotogota</taxon>
        <taxon>Thermotogae</taxon>
        <taxon>Thermotogales</taxon>
        <taxon>Thermotogaceae</taxon>
        <taxon>Thermotoga</taxon>
    </lineage>
</organism>
<sequence length="128" mass="15294">MAYVKERIYESMFIIAPNVPEEERENLVERVKKIIEERVKGKIEKVERMGMRKFAYEIKKFSEGDYTVIYFRCDGQNLQELENFYRVTPEIIRWQTFRRFDLEKKERKAQREKAAAEAVETGEGGSEA</sequence>
<accession>A5IJH1</accession>
<dbReference type="EMBL" id="CP000702">
    <property type="protein sequence ID" value="ABQ46344.1"/>
    <property type="molecule type" value="Genomic_DNA"/>
</dbReference>
<dbReference type="RefSeq" id="WP_011942980.1">
    <property type="nucleotide sequence ID" value="NC_009486.1"/>
</dbReference>
<dbReference type="SMR" id="A5IJH1"/>
<dbReference type="STRING" id="390874.Tpet_0315"/>
<dbReference type="KEGG" id="tpt:Tpet_0315"/>
<dbReference type="eggNOG" id="COG0360">
    <property type="taxonomic scope" value="Bacteria"/>
</dbReference>
<dbReference type="HOGENOM" id="CLU_113441_5_0_0"/>
<dbReference type="Proteomes" id="UP000006558">
    <property type="component" value="Chromosome"/>
</dbReference>
<dbReference type="GO" id="GO:0005737">
    <property type="term" value="C:cytoplasm"/>
    <property type="evidence" value="ECO:0007669"/>
    <property type="project" value="UniProtKB-ARBA"/>
</dbReference>
<dbReference type="GO" id="GO:1990904">
    <property type="term" value="C:ribonucleoprotein complex"/>
    <property type="evidence" value="ECO:0007669"/>
    <property type="project" value="UniProtKB-KW"/>
</dbReference>
<dbReference type="GO" id="GO:0005840">
    <property type="term" value="C:ribosome"/>
    <property type="evidence" value="ECO:0007669"/>
    <property type="project" value="UniProtKB-KW"/>
</dbReference>
<dbReference type="GO" id="GO:0070181">
    <property type="term" value="F:small ribosomal subunit rRNA binding"/>
    <property type="evidence" value="ECO:0007669"/>
    <property type="project" value="TreeGrafter"/>
</dbReference>
<dbReference type="GO" id="GO:0003735">
    <property type="term" value="F:structural constituent of ribosome"/>
    <property type="evidence" value="ECO:0007669"/>
    <property type="project" value="InterPro"/>
</dbReference>
<dbReference type="GO" id="GO:0006412">
    <property type="term" value="P:translation"/>
    <property type="evidence" value="ECO:0007669"/>
    <property type="project" value="UniProtKB-UniRule"/>
</dbReference>
<dbReference type="CDD" id="cd00473">
    <property type="entry name" value="bS6"/>
    <property type="match status" value="1"/>
</dbReference>
<dbReference type="Gene3D" id="3.30.70.60">
    <property type="match status" value="1"/>
</dbReference>
<dbReference type="HAMAP" id="MF_00360">
    <property type="entry name" value="Ribosomal_bS6"/>
    <property type="match status" value="1"/>
</dbReference>
<dbReference type="InterPro" id="IPR000529">
    <property type="entry name" value="Ribosomal_bS6"/>
</dbReference>
<dbReference type="InterPro" id="IPR035980">
    <property type="entry name" value="Ribosomal_bS6_sf"/>
</dbReference>
<dbReference type="InterPro" id="IPR020814">
    <property type="entry name" value="Ribosomal_S6_plastid/chlpt"/>
</dbReference>
<dbReference type="InterPro" id="IPR014717">
    <property type="entry name" value="Transl_elong_EF1B/ribsomal_bS6"/>
</dbReference>
<dbReference type="NCBIfam" id="TIGR00166">
    <property type="entry name" value="S6"/>
    <property type="match status" value="1"/>
</dbReference>
<dbReference type="PANTHER" id="PTHR21011">
    <property type="entry name" value="MITOCHONDRIAL 28S RIBOSOMAL PROTEIN S6"/>
    <property type="match status" value="1"/>
</dbReference>
<dbReference type="PANTHER" id="PTHR21011:SF1">
    <property type="entry name" value="SMALL RIBOSOMAL SUBUNIT PROTEIN BS6M"/>
    <property type="match status" value="1"/>
</dbReference>
<dbReference type="Pfam" id="PF01250">
    <property type="entry name" value="Ribosomal_S6"/>
    <property type="match status" value="1"/>
</dbReference>
<dbReference type="SUPFAM" id="SSF54995">
    <property type="entry name" value="Ribosomal protein S6"/>
    <property type="match status" value="1"/>
</dbReference>
<keyword id="KW-0687">Ribonucleoprotein</keyword>
<keyword id="KW-0689">Ribosomal protein</keyword>
<keyword id="KW-0694">RNA-binding</keyword>
<keyword id="KW-0699">rRNA-binding</keyword>
<feature type="chain" id="PRO_1000005379" description="Small ribosomal subunit protein bS6">
    <location>
        <begin position="1"/>
        <end position="128"/>
    </location>
</feature>